<organism>
    <name type="scientific">Bacillus mycoides (strain KBAB4)</name>
    <name type="common">Bacillus weihenstephanensis</name>
    <dbReference type="NCBI Taxonomy" id="315730"/>
    <lineage>
        <taxon>Bacteria</taxon>
        <taxon>Bacillati</taxon>
        <taxon>Bacillota</taxon>
        <taxon>Bacilli</taxon>
        <taxon>Bacillales</taxon>
        <taxon>Bacillaceae</taxon>
        <taxon>Bacillus</taxon>
        <taxon>Bacillus cereus group</taxon>
    </lineage>
</organism>
<name>RECU_BACMK</name>
<sequence>MTIRYPNGKRYDQASQPHKTPIKKHTYSNRGMSLEEELNDTNQYYLTHNIACVHKKPTPLQIVKVDYPARSAAVVKEAYFKQPSTTDYNGVYKGKYIDFEAKETKNKTSFPLQNFHLHQIEHMKQVVAHNGIAFVIIKFTLFDEFYLLDAKHIIAFWNRQNTGGRKSITKQEIEEHGSLLSCGYHPRIDYIRVLDTVYFS</sequence>
<dbReference type="EC" id="3.1.21.10" evidence="1"/>
<dbReference type="EMBL" id="CP000903">
    <property type="protein sequence ID" value="ABY42722.1"/>
    <property type="molecule type" value="Genomic_DNA"/>
</dbReference>
<dbReference type="RefSeq" id="WP_002030800.1">
    <property type="nucleotide sequence ID" value="NC_010184.1"/>
</dbReference>
<dbReference type="SMR" id="A9VMG0"/>
<dbReference type="GeneID" id="66263397"/>
<dbReference type="KEGG" id="bwe:BcerKBAB4_1475"/>
<dbReference type="eggNOG" id="COG3331">
    <property type="taxonomic scope" value="Bacteria"/>
</dbReference>
<dbReference type="HOGENOM" id="CLU_096340_0_0_9"/>
<dbReference type="Proteomes" id="UP000002154">
    <property type="component" value="Chromosome"/>
</dbReference>
<dbReference type="GO" id="GO:0005737">
    <property type="term" value="C:cytoplasm"/>
    <property type="evidence" value="ECO:0007669"/>
    <property type="project" value="UniProtKB-SubCell"/>
</dbReference>
<dbReference type="GO" id="GO:0004519">
    <property type="term" value="F:endonuclease activity"/>
    <property type="evidence" value="ECO:0007669"/>
    <property type="project" value="UniProtKB-UniRule"/>
</dbReference>
<dbReference type="GO" id="GO:0000287">
    <property type="term" value="F:magnesium ion binding"/>
    <property type="evidence" value="ECO:0007669"/>
    <property type="project" value="UniProtKB-UniRule"/>
</dbReference>
<dbReference type="GO" id="GO:0003676">
    <property type="term" value="F:nucleic acid binding"/>
    <property type="evidence" value="ECO:0007669"/>
    <property type="project" value="InterPro"/>
</dbReference>
<dbReference type="GO" id="GO:0007059">
    <property type="term" value="P:chromosome segregation"/>
    <property type="evidence" value="ECO:0007669"/>
    <property type="project" value="UniProtKB-UniRule"/>
</dbReference>
<dbReference type="GO" id="GO:0006310">
    <property type="term" value="P:DNA recombination"/>
    <property type="evidence" value="ECO:0007669"/>
    <property type="project" value="UniProtKB-UniRule"/>
</dbReference>
<dbReference type="GO" id="GO:0006281">
    <property type="term" value="P:DNA repair"/>
    <property type="evidence" value="ECO:0007669"/>
    <property type="project" value="UniProtKB-UniRule"/>
</dbReference>
<dbReference type="CDD" id="cd22354">
    <property type="entry name" value="RecU-like"/>
    <property type="match status" value="1"/>
</dbReference>
<dbReference type="Gene3D" id="3.40.1350.10">
    <property type="match status" value="1"/>
</dbReference>
<dbReference type="HAMAP" id="MF_00130">
    <property type="entry name" value="RecU"/>
    <property type="match status" value="1"/>
</dbReference>
<dbReference type="InterPro" id="IPR004612">
    <property type="entry name" value="Resolv_RecU"/>
</dbReference>
<dbReference type="InterPro" id="IPR011335">
    <property type="entry name" value="Restrct_endonuc-II-like"/>
</dbReference>
<dbReference type="InterPro" id="IPR011856">
    <property type="entry name" value="tRNA_endonuc-like_dom_sf"/>
</dbReference>
<dbReference type="NCBIfam" id="NF002581">
    <property type="entry name" value="PRK02234.1-2"/>
    <property type="match status" value="1"/>
</dbReference>
<dbReference type="NCBIfam" id="NF002584">
    <property type="entry name" value="PRK02234.1-5"/>
    <property type="match status" value="1"/>
</dbReference>
<dbReference type="NCBIfam" id="NF002585">
    <property type="entry name" value="PRK02234.1-6"/>
    <property type="match status" value="1"/>
</dbReference>
<dbReference type="NCBIfam" id="TIGR00648">
    <property type="entry name" value="recU"/>
    <property type="match status" value="1"/>
</dbReference>
<dbReference type="Pfam" id="PF03838">
    <property type="entry name" value="RecU"/>
    <property type="match status" value="1"/>
</dbReference>
<dbReference type="PIRSF" id="PIRSF037785">
    <property type="entry name" value="RecU"/>
    <property type="match status" value="1"/>
</dbReference>
<dbReference type="SUPFAM" id="SSF52980">
    <property type="entry name" value="Restriction endonuclease-like"/>
    <property type="match status" value="1"/>
</dbReference>
<feature type="chain" id="PRO_1000095674" description="Holliday junction resolvase RecU">
    <location>
        <begin position="1"/>
        <end position="200"/>
    </location>
</feature>
<feature type="region of interest" description="Disordered" evidence="2">
    <location>
        <begin position="1"/>
        <end position="24"/>
    </location>
</feature>
<feature type="binding site" evidence="1">
    <location>
        <position position="85"/>
    </location>
    <ligand>
        <name>Mg(2+)</name>
        <dbReference type="ChEBI" id="CHEBI:18420"/>
    </ligand>
</feature>
<feature type="binding site" evidence="1">
    <location>
        <position position="87"/>
    </location>
    <ligand>
        <name>Mg(2+)</name>
        <dbReference type="ChEBI" id="CHEBI:18420"/>
    </ligand>
</feature>
<feature type="binding site" evidence="1">
    <location>
        <position position="100"/>
    </location>
    <ligand>
        <name>Mg(2+)</name>
        <dbReference type="ChEBI" id="CHEBI:18420"/>
    </ligand>
</feature>
<feature type="binding site" evidence="1">
    <location>
        <position position="119"/>
    </location>
    <ligand>
        <name>Mg(2+)</name>
        <dbReference type="ChEBI" id="CHEBI:18420"/>
    </ligand>
</feature>
<feature type="site" description="Transition state stabilizer" evidence="1">
    <location>
        <position position="102"/>
    </location>
</feature>
<comment type="function">
    <text evidence="1">Endonuclease that resolves Holliday junction intermediates in genetic recombination. Cleaves mobile four-strand junctions by introducing symmetrical nicks in paired strands. Promotes annealing of linear ssDNA with homologous dsDNA. Required for DNA repair, homologous recombination and chromosome segregation.</text>
</comment>
<comment type="catalytic activity">
    <reaction evidence="1">
        <text>Endonucleolytic cleavage at a junction such as a reciprocal single-stranded crossover between two homologous DNA duplexes (Holliday junction).</text>
        <dbReference type="EC" id="3.1.21.10"/>
    </reaction>
</comment>
<comment type="cofactor">
    <cofactor evidence="1">
        <name>Mg(2+)</name>
        <dbReference type="ChEBI" id="CHEBI:18420"/>
    </cofactor>
    <text evidence="1">Binds 1 Mg(2+) ion per subunit.</text>
</comment>
<comment type="subcellular location">
    <subcellularLocation>
        <location evidence="1">Cytoplasm</location>
    </subcellularLocation>
</comment>
<comment type="similarity">
    <text evidence="1">Belongs to the RecU family.</text>
</comment>
<evidence type="ECO:0000255" key="1">
    <source>
        <dbReference type="HAMAP-Rule" id="MF_00130"/>
    </source>
</evidence>
<evidence type="ECO:0000256" key="2">
    <source>
        <dbReference type="SAM" id="MobiDB-lite"/>
    </source>
</evidence>
<accession>A9VMG0</accession>
<keyword id="KW-0963">Cytoplasm</keyword>
<keyword id="KW-0227">DNA damage</keyword>
<keyword id="KW-0233">DNA recombination</keyword>
<keyword id="KW-0234">DNA repair</keyword>
<keyword id="KW-0255">Endonuclease</keyword>
<keyword id="KW-0378">Hydrolase</keyword>
<keyword id="KW-0460">Magnesium</keyword>
<keyword id="KW-0479">Metal-binding</keyword>
<keyword id="KW-0540">Nuclease</keyword>
<protein>
    <recommendedName>
        <fullName evidence="1">Holliday junction resolvase RecU</fullName>
        <ecNumber evidence="1">3.1.21.10</ecNumber>
    </recommendedName>
    <alternativeName>
        <fullName evidence="1">Recombination protein U homolog</fullName>
    </alternativeName>
</protein>
<proteinExistence type="inferred from homology"/>
<reference key="1">
    <citation type="journal article" date="2008" name="Chem. Biol. Interact.">
        <title>Extending the Bacillus cereus group genomics to putative food-borne pathogens of different toxicity.</title>
        <authorList>
            <person name="Lapidus A."/>
            <person name="Goltsman E."/>
            <person name="Auger S."/>
            <person name="Galleron N."/>
            <person name="Segurens B."/>
            <person name="Dossat C."/>
            <person name="Land M.L."/>
            <person name="Broussolle V."/>
            <person name="Brillard J."/>
            <person name="Guinebretiere M.-H."/>
            <person name="Sanchis V."/>
            <person name="Nguen-the C."/>
            <person name="Lereclus D."/>
            <person name="Richardson P."/>
            <person name="Wincker P."/>
            <person name="Weissenbach J."/>
            <person name="Ehrlich S.D."/>
            <person name="Sorokin A."/>
        </authorList>
    </citation>
    <scope>NUCLEOTIDE SEQUENCE [LARGE SCALE GENOMIC DNA]</scope>
    <source>
        <strain>KBAB4</strain>
    </source>
</reference>
<gene>
    <name evidence="1" type="primary">recU</name>
    <name type="ordered locus">BcerKBAB4_1475</name>
</gene>